<accession>P38618</accession>
<accession>Q4J8U3</accession>
<organism>
    <name type="scientific">Sulfolobus acidocaldarius (strain ATCC 33909 / DSM 639 / JCM 8929 / NBRC 15157 / NCIMB 11770)</name>
    <dbReference type="NCBI Taxonomy" id="330779"/>
    <lineage>
        <taxon>Archaea</taxon>
        <taxon>Thermoproteota</taxon>
        <taxon>Thermoprotei</taxon>
        <taxon>Sulfolobales</taxon>
        <taxon>Sulfolobaceae</taxon>
        <taxon>Sulfolobus</taxon>
    </lineage>
</organism>
<evidence type="ECO:0000256" key="1">
    <source>
        <dbReference type="SAM" id="MobiDB-lite"/>
    </source>
</evidence>
<evidence type="ECO:0000305" key="2"/>
<comment type="similarity">
    <text evidence="2">Belongs to the eukaryotic ribosomal protein eL31 family.</text>
</comment>
<protein>
    <recommendedName>
        <fullName evidence="2">Large ribosomal subunit protein eL31</fullName>
    </recommendedName>
    <alternativeName>
        <fullName>50S ribosomal protein L31e</fullName>
    </alternativeName>
</protein>
<gene>
    <name type="primary">rpl31e</name>
    <name type="ordered locus">Saci_1466</name>
</gene>
<feature type="chain" id="PRO_0000153805" description="Large ribosomal subunit protein eL31">
    <location>
        <begin position="1"/>
        <end position="129"/>
    </location>
</feature>
<feature type="region of interest" description="Disordered" evidence="1">
    <location>
        <begin position="1"/>
        <end position="46"/>
    </location>
</feature>
<feature type="compositionally biased region" description="Basic and acidic residues" evidence="1">
    <location>
        <begin position="9"/>
        <end position="27"/>
    </location>
</feature>
<feature type="compositionally biased region" description="Basic and acidic residues" evidence="1">
    <location>
        <begin position="35"/>
        <end position="46"/>
    </location>
</feature>
<dbReference type="EMBL" id="X77509">
    <property type="protein sequence ID" value="CAA54639.1"/>
    <property type="molecule type" value="Genomic_DNA"/>
</dbReference>
<dbReference type="EMBL" id="CP000077">
    <property type="protein sequence ID" value="AAY80787.1"/>
    <property type="molecule type" value="Genomic_DNA"/>
</dbReference>
<dbReference type="PIR" id="S53699">
    <property type="entry name" value="S53699"/>
</dbReference>
<dbReference type="RefSeq" id="WP_011278289.1">
    <property type="nucleotide sequence ID" value="NC_007181.1"/>
</dbReference>
<dbReference type="PDB" id="8HKU">
    <property type="method" value="EM"/>
    <property type="resolution" value="2.72 A"/>
    <property type="chains" value="L31E=42-116"/>
</dbReference>
<dbReference type="PDB" id="8HKV">
    <property type="method" value="EM"/>
    <property type="resolution" value="4.94 A"/>
    <property type="chains" value="L31E=42-116"/>
</dbReference>
<dbReference type="PDB" id="8HKY">
    <property type="method" value="EM"/>
    <property type="resolution" value="4.45 A"/>
    <property type="chains" value="L31E=42-116"/>
</dbReference>
<dbReference type="PDB" id="8HKZ">
    <property type="method" value="EM"/>
    <property type="resolution" value="4.78 A"/>
    <property type="chains" value="L31E=42-116"/>
</dbReference>
<dbReference type="PDB" id="8HL1">
    <property type="method" value="EM"/>
    <property type="resolution" value="3.93 A"/>
    <property type="chains" value="L31E=42-116"/>
</dbReference>
<dbReference type="PDB" id="8HL2">
    <property type="method" value="EM"/>
    <property type="resolution" value="4.10 A"/>
    <property type="chains" value="L31E=42-116"/>
</dbReference>
<dbReference type="PDB" id="8HL3">
    <property type="method" value="EM"/>
    <property type="resolution" value="4.80 A"/>
    <property type="chains" value="L31E=42-116"/>
</dbReference>
<dbReference type="PDB" id="8HL4">
    <property type="method" value="EM"/>
    <property type="resolution" value="4.62 A"/>
    <property type="chains" value="L31E=42-116"/>
</dbReference>
<dbReference type="PDB" id="8HL5">
    <property type="method" value="EM"/>
    <property type="resolution" value="5.72 A"/>
    <property type="chains" value="L31E=42-116"/>
</dbReference>
<dbReference type="PDBsum" id="8HKU"/>
<dbReference type="PDBsum" id="8HKV"/>
<dbReference type="PDBsum" id="8HKY"/>
<dbReference type="PDBsum" id="8HKZ"/>
<dbReference type="PDBsum" id="8HL1"/>
<dbReference type="PDBsum" id="8HL2"/>
<dbReference type="PDBsum" id="8HL3"/>
<dbReference type="PDBsum" id="8HL4"/>
<dbReference type="PDBsum" id="8HL5"/>
<dbReference type="EMDB" id="EMD-34860"/>
<dbReference type="EMDB" id="EMD-34861"/>
<dbReference type="EMDB" id="EMD-34863"/>
<dbReference type="EMDB" id="EMD-34864"/>
<dbReference type="EMDB" id="EMD-34866"/>
<dbReference type="EMDB" id="EMD-34867"/>
<dbReference type="EMDB" id="EMD-34868"/>
<dbReference type="EMDB" id="EMD-34869"/>
<dbReference type="EMDB" id="EMD-34870"/>
<dbReference type="SMR" id="P38618"/>
<dbReference type="STRING" id="330779.Saci_1466"/>
<dbReference type="GeneID" id="14551961"/>
<dbReference type="KEGG" id="sai:Saci_1466"/>
<dbReference type="PATRIC" id="fig|330779.12.peg.1410"/>
<dbReference type="eggNOG" id="arCOG04473">
    <property type="taxonomic scope" value="Archaea"/>
</dbReference>
<dbReference type="HOGENOM" id="CLU_1943948_0_0_2"/>
<dbReference type="Proteomes" id="UP000001018">
    <property type="component" value="Chromosome"/>
</dbReference>
<dbReference type="GO" id="GO:1990904">
    <property type="term" value="C:ribonucleoprotein complex"/>
    <property type="evidence" value="ECO:0007669"/>
    <property type="project" value="UniProtKB-KW"/>
</dbReference>
<dbReference type="GO" id="GO:0005840">
    <property type="term" value="C:ribosome"/>
    <property type="evidence" value="ECO:0007669"/>
    <property type="project" value="UniProtKB-KW"/>
</dbReference>
<dbReference type="GO" id="GO:0003735">
    <property type="term" value="F:structural constituent of ribosome"/>
    <property type="evidence" value="ECO:0007669"/>
    <property type="project" value="InterPro"/>
</dbReference>
<dbReference type="GO" id="GO:0006412">
    <property type="term" value="P:translation"/>
    <property type="evidence" value="ECO:0007669"/>
    <property type="project" value="InterPro"/>
</dbReference>
<dbReference type="CDD" id="cd00463">
    <property type="entry name" value="Ribosomal_L31e"/>
    <property type="match status" value="1"/>
</dbReference>
<dbReference type="Gene3D" id="3.10.440.10">
    <property type="match status" value="1"/>
</dbReference>
<dbReference type="InterPro" id="IPR000054">
    <property type="entry name" value="Ribosomal_eL31"/>
</dbReference>
<dbReference type="InterPro" id="IPR023621">
    <property type="entry name" value="Ribosomal_eL31_dom_sf"/>
</dbReference>
<dbReference type="NCBIfam" id="NF002258">
    <property type="entry name" value="PRK01192.1-1"/>
    <property type="match status" value="1"/>
</dbReference>
<dbReference type="Pfam" id="PF01198">
    <property type="entry name" value="Ribosomal_L31e"/>
    <property type="match status" value="1"/>
</dbReference>
<dbReference type="SMART" id="SM01380">
    <property type="entry name" value="Ribosomal_L31e"/>
    <property type="match status" value="1"/>
</dbReference>
<dbReference type="SUPFAM" id="SSF54575">
    <property type="entry name" value="Ribosomal protein L31e"/>
    <property type="match status" value="1"/>
</dbReference>
<keyword id="KW-0002">3D-structure</keyword>
<keyword id="KW-1185">Reference proteome</keyword>
<keyword id="KW-0687">Ribonucleoprotein</keyword>
<keyword id="KW-0689">Ribosomal protein</keyword>
<name>RL31_SULAC</name>
<proteinExistence type="evidence at protein level"/>
<sequence>MSQETTATKQEEQKTSELQQQKKEEQKPQQATTTTKEEKKTKPEKENFEMVINFRRVIMGRKTTRTKRAIKYVRYMVKRHFGAEKVIIDPLLAKAITMNGRDKIVRRVRIAVKRIGEKTYLARLAIKSE</sequence>
<reference key="1">
    <citation type="journal article" date="1995" name="Biochim. Biophys. Acta">
        <title>Nucleotide sequence of a gene cluster encoding ribosomal proteins in the thermoacidophilic crenarchaeon Sulfolobus acidocaldarius.</title>
        <authorList>
            <person name="Moll R."/>
            <person name="Schmidtke S."/>
            <person name="Schaefer G."/>
        </authorList>
    </citation>
    <scope>NUCLEOTIDE SEQUENCE [GENOMIC DNA]</scope>
    <source>
        <strain>ATCC 33909 / DSM 639 / JCM 8929 / NBRC 15157 / NCIMB 11770</strain>
    </source>
</reference>
<reference key="2">
    <citation type="journal article" date="2005" name="J. Bacteriol.">
        <title>The genome of Sulfolobus acidocaldarius, a model organism of the Crenarchaeota.</title>
        <authorList>
            <person name="Chen L."/>
            <person name="Bruegger K."/>
            <person name="Skovgaard M."/>
            <person name="Redder P."/>
            <person name="She Q."/>
            <person name="Torarinsson E."/>
            <person name="Greve B."/>
            <person name="Awayez M."/>
            <person name="Zibat A."/>
            <person name="Klenk H.-P."/>
            <person name="Garrett R.A."/>
        </authorList>
    </citation>
    <scope>NUCLEOTIDE SEQUENCE [LARGE SCALE GENOMIC DNA]</scope>
    <source>
        <strain>ATCC 33909 / DSM 639 / JCM 8929 / NBRC 15157 / NCIMB 11770</strain>
    </source>
</reference>